<reference evidence="2" key="1">
    <citation type="journal article" date="2005" name="Biochem. Biophys. Res. Commun.">
        <title>Identification and functional analysis of a novel bradykinin inhibitory peptide in the venoms of new world crotalinae pit vipers.</title>
        <authorList>
            <person name="Graham R.L.J."/>
            <person name="Graham C."/>
            <person name="McClean S."/>
            <person name="Chen T."/>
            <person name="O'Rourke M."/>
            <person name="Hirst D."/>
            <person name="Theakston D."/>
            <person name="Shaw C."/>
        </authorList>
    </citation>
    <scope>PROTEIN SEQUENCE</scope>
    <scope>FUNCTION</scope>
    <scope>SUBCELLULAR LOCATION</scope>
    <scope>MASS SPECTROMETRY</scope>
    <source>
        <tissue evidence="1">Venom</tissue>
    </source>
</reference>
<name>BKIP_CROVV</name>
<organism>
    <name type="scientific">Crotalus viridis viridis</name>
    <name type="common">Prairie rattlesnake</name>
    <dbReference type="NCBI Taxonomy" id="8742"/>
    <lineage>
        <taxon>Eukaryota</taxon>
        <taxon>Metazoa</taxon>
        <taxon>Chordata</taxon>
        <taxon>Craniata</taxon>
        <taxon>Vertebrata</taxon>
        <taxon>Euteleostomi</taxon>
        <taxon>Lepidosauria</taxon>
        <taxon>Squamata</taxon>
        <taxon>Bifurcata</taxon>
        <taxon>Unidentata</taxon>
        <taxon>Episquamata</taxon>
        <taxon>Toxicofera</taxon>
        <taxon>Serpentes</taxon>
        <taxon>Colubroidea</taxon>
        <taxon>Viperidae</taxon>
        <taxon>Crotalinae</taxon>
        <taxon>Crotalus</taxon>
    </lineage>
</organism>
<dbReference type="GO" id="GO:0005576">
    <property type="term" value="C:extracellular region"/>
    <property type="evidence" value="ECO:0000314"/>
    <property type="project" value="UniProtKB"/>
</dbReference>
<dbReference type="GO" id="GO:0090729">
    <property type="term" value="F:toxin activity"/>
    <property type="evidence" value="ECO:0000314"/>
    <property type="project" value="UniProtKB"/>
</dbReference>
<dbReference type="GO" id="GO:0097746">
    <property type="term" value="P:blood vessel diameter maintenance"/>
    <property type="evidence" value="ECO:0007669"/>
    <property type="project" value="UniProtKB-KW"/>
</dbReference>
<dbReference type="GO" id="GO:0044509">
    <property type="term" value="P:venom-mediated perturbation of signal transduction in another organism"/>
    <property type="evidence" value="ECO:0000314"/>
    <property type="project" value="UniProtKB"/>
</dbReference>
<dbReference type="GO" id="GO:0044551">
    <property type="term" value="P:venom-mediated vasodilation in another organism"/>
    <property type="evidence" value="ECO:0000314"/>
    <property type="project" value="UniProtKB"/>
</dbReference>
<keyword id="KW-1222">Bradykinin receptor impairing toxin</keyword>
<keyword id="KW-0903">Direct protein sequencing</keyword>
<keyword id="KW-1213">G-protein coupled receptor impairing toxin</keyword>
<keyword id="KW-0964">Secreted</keyword>
<keyword id="KW-0800">Toxin</keyword>
<keyword id="KW-0838">Vasoactive</keyword>
<proteinExistence type="evidence at protein level"/>
<accession>P85024</accession>
<evidence type="ECO:0000269" key="1">
    <source>
    </source>
</evidence>
<evidence type="ECO:0000305" key="2"/>
<protein>
    <recommendedName>
        <fullName>Bradykinin inhibitor peptide</fullName>
        <shortName>BIP</shortName>
    </recommendedName>
</protein>
<comment type="function">
    <text evidence="1">Bradykinin inhibitor peptide antagonizes the vasodilatory actions of bradykinin at the B2 bradykinin receptor (BDKRB2).</text>
</comment>
<comment type="subcellular location">
    <subcellularLocation>
        <location evidence="1">Secreted</location>
    </subcellularLocation>
</comment>
<comment type="tissue specificity">
    <text>Expressed by the venom gland.</text>
</comment>
<comment type="mass spectrometry" mass="1063.18" method="MALDI" evidence="1"/>
<comment type="similarity">
    <text evidence="2">Belongs to the bradykinin inhibitor peptide family.</text>
</comment>
<sequence length="11" mass="1063">TPPAGPDVGPR</sequence>
<feature type="peptide" id="PRO_0000258039" description="Bradykinin inhibitor peptide" evidence="1">
    <location>
        <begin position="1"/>
        <end position="11"/>
    </location>
</feature>